<gene>
    <name evidence="15" type="primary">PSKR1</name>
    <name type="synonym">PSKR</name>
    <name evidence="18" type="ordered locus">At2g02220</name>
    <name evidence="19" type="ORF">F5O4.1</name>
</gene>
<comment type="function">
    <text evidence="6 7 10 11">Phytosulfokine receptor with both a serine/threonine-protein kinase activity and a guanylate cyclase activity (PubMed:21504901). Regulates, in response to phytosulfokine binding, a signaling cascade involved in plant cell differentiation, organogenesis, somatic embryogenesis, cellular proliferation and plant growth. Involved in plant immunity, with antagonistic effects on bacterial and fungal resistances (PubMed:23062058). Not involved in PSY perception. CNGC17 and AHAs form a functional cation-translocating unit that is activated by PSKR1/BAK1 and possibly other BAK1/RLK complexes (PubMed:26071421).</text>
</comment>
<comment type="catalytic activity">
    <reaction evidence="10">
        <text>L-seryl-[protein] + ATP = O-phospho-L-seryl-[protein] + ADP + H(+)</text>
        <dbReference type="Rhea" id="RHEA:17989"/>
        <dbReference type="Rhea" id="RHEA-COMP:9863"/>
        <dbReference type="Rhea" id="RHEA-COMP:11604"/>
        <dbReference type="ChEBI" id="CHEBI:15378"/>
        <dbReference type="ChEBI" id="CHEBI:29999"/>
        <dbReference type="ChEBI" id="CHEBI:30616"/>
        <dbReference type="ChEBI" id="CHEBI:83421"/>
        <dbReference type="ChEBI" id="CHEBI:456216"/>
        <dbReference type="EC" id="2.7.11.1"/>
    </reaction>
</comment>
<comment type="catalytic activity">
    <reaction evidence="10">
        <text>L-threonyl-[protein] + ATP = O-phospho-L-threonyl-[protein] + ADP + H(+)</text>
        <dbReference type="Rhea" id="RHEA:46608"/>
        <dbReference type="Rhea" id="RHEA-COMP:11060"/>
        <dbReference type="Rhea" id="RHEA-COMP:11605"/>
        <dbReference type="ChEBI" id="CHEBI:15378"/>
        <dbReference type="ChEBI" id="CHEBI:30013"/>
        <dbReference type="ChEBI" id="CHEBI:30616"/>
        <dbReference type="ChEBI" id="CHEBI:61977"/>
        <dbReference type="ChEBI" id="CHEBI:456216"/>
        <dbReference type="EC" id="2.7.11.1"/>
    </reaction>
</comment>
<comment type="catalytic activity">
    <reaction evidence="10">
        <text>GTP = 3',5'-cyclic GMP + diphosphate</text>
        <dbReference type="Rhea" id="RHEA:13665"/>
        <dbReference type="ChEBI" id="CHEBI:33019"/>
        <dbReference type="ChEBI" id="CHEBI:37565"/>
        <dbReference type="ChEBI" id="CHEBI:57746"/>
        <dbReference type="EC" id="4.6.1.2"/>
    </reaction>
</comment>
<comment type="cofactor">
    <cofactor evidence="10">
        <name>Mg(2+)</name>
        <dbReference type="ChEBI" id="CHEBI:18420"/>
    </cofactor>
    <cofactor evidence="10">
        <name>Mn(2+)</name>
        <dbReference type="ChEBI" id="CHEBI:29035"/>
    </cofactor>
</comment>
<comment type="activity regulation">
    <text evidence="10">cGMP suppresses kinase activity.</text>
</comment>
<comment type="biophysicochemical properties">
    <kinetics>
        <KM evidence="10">7.5 uM for Ser/Thr peptide 1 for the protein serine-threonine kinase activity</KM>
        <Vmax evidence="10">1800.0 nmol/min/mg enzyme with Ser/Thr peptide 1 as substrate</Vmax>
    </kinetics>
</comment>
<comment type="subunit">
    <text evidence="12 13 14">Homo- and heterodimers with PSY1R (PubMed:25267325). Heterodimers with the somatic embryogenesis receptor-like kinases (SERKs) (PubMed:26308901). PSK is not directly involved in PSKR-SERK interaction but stabilizes PSKR island domain for recruitment of a SERK (PubMed:26308901). Part of a functional complex containing PSKR1, BAK1, CNGC17, and AHA (PubMed:26071421). Interacts with AHA1, AHA2, and BAK1, but not with CNGC17 or BRI1 (PubMed:26071421).</text>
</comment>
<comment type="interaction">
    <interactant intactId="EBI-16172949">
        <id>Q9ZVR7</id>
    </interactant>
    <interactant intactId="EBI-20651385">
        <id>Q9SH71</id>
        <label>At1g64210</label>
    </interactant>
    <organismsDiffer>false</organismsDiffer>
    <experiments>2</experiments>
</comment>
<comment type="interaction">
    <interactant intactId="EBI-16172949">
        <id>Q9ZVR7</id>
    </interactant>
    <interactant intactId="EBI-1238661">
        <id>Q9M9C5</id>
        <label>At1g68400</label>
    </interactant>
    <organismsDiffer>false</organismsDiffer>
    <experiments>3</experiments>
</comment>
<comment type="interaction">
    <interactant intactId="EBI-16172949">
        <id>Q9ZVR7</id>
    </interactant>
    <interactant intactId="EBI-20654045">
        <id>A0A1I9LQ53</id>
        <label>At3g50230</label>
    </interactant>
    <organismsDiffer>false</organismsDiffer>
    <experiments>3</experiments>
</comment>
<comment type="interaction">
    <interactant intactId="EBI-16172949">
        <id>Q9ZVR7</id>
    </interactant>
    <interactant intactId="EBI-20657062">
        <id>Q9FL63</id>
        <label>At5g24100</label>
    </interactant>
    <organismsDiffer>false</organismsDiffer>
    <experiments>3</experiments>
</comment>
<comment type="interaction">
    <interactant intactId="EBI-16172949">
        <id>Q9ZVR7</id>
    </interactant>
    <interactant intactId="EBI-20653342">
        <id>A0A178UFM8</id>
        <label>At5g51560</label>
    </interactant>
    <organismsDiffer>false</organismsDiffer>
    <experiments>3</experiments>
</comment>
<comment type="interaction">
    <interactant intactId="EBI-16172949">
        <id>Q9ZVR7</id>
    </interactant>
    <interactant intactId="EBI-617138">
        <id>Q94F62</id>
        <label>BAK1</label>
    </interactant>
    <organismsDiffer>false</organismsDiffer>
    <experiments>5</experiments>
</comment>
<comment type="interaction">
    <interactant intactId="EBI-16172949">
        <id>Q9ZVR7</id>
    </interactant>
    <interactant intactId="EBI-16914444">
        <id>Q9LJY0</id>
        <label>PRK4</label>
    </interactant>
    <organismsDiffer>false</organismsDiffer>
    <experiments>2</experiments>
</comment>
<comment type="interaction">
    <interactant intactId="EBI-16172949">
        <id>Q9ZVR7</id>
    </interactant>
    <interactant intactId="EBI-1626936">
        <id>Q9LVI6</id>
        <label>RLK902</label>
    </interactant>
    <organismsDiffer>false</organismsDiffer>
    <experiments>2</experiments>
</comment>
<comment type="interaction">
    <interactant intactId="EBI-16172949">
        <id>Q9ZVR7</id>
    </interactant>
    <interactant intactId="EBI-1555537">
        <id>Q94AG2</id>
        <label>SERK1</label>
    </interactant>
    <organismsDiffer>false</organismsDiffer>
    <experiments>4</experiments>
</comment>
<comment type="interaction">
    <interactant intactId="EBI-16172949">
        <id>Q9ZVR7</id>
    </interactant>
    <interactant intactId="EBI-6299033">
        <id>Q9XIC7</id>
        <label>SERK2</label>
    </interactant>
    <organismsDiffer>false</organismsDiffer>
    <experiments>5</experiments>
</comment>
<comment type="subcellular location">
    <subcellularLocation>
        <location evidence="13">Cell membrane</location>
        <topology evidence="17">Single-pass type I membrane protein</topology>
    </subcellularLocation>
</comment>
<comment type="tissue specificity">
    <text evidence="6 8">Weakly expressed in roots, leaves, stems and flowers (PubMed:16829587). Expressed in the primary and lateral roots, including root primordia and root tips, but not in the hypocotyl (PubMed:19076296).</text>
</comment>
<comment type="induction">
    <text evidence="9">Up-regulated by fungal infection and wounding.</text>
</comment>
<comment type="disruption phenotype">
    <text evidence="6 7 8 11">Gradual loss of individual cells potential to form callus as the tissues mature (PubMed:16829587). Premature senescence of the leaves (PubMed:17989228). Limited root growth (PubMed:19076296). Enhanced resistance to bacterial biotrophic pathogens, but increased susceptibility to necrotrophic fungal infection (PubMed:23062058).</text>
</comment>
<comment type="miscellaneous">
    <text evidence="7">PSKR1 and PSYR1 mediate a signaling pathway by two distinct ligands, which redundantly contribute to cellular proliferation and plant growth.</text>
</comment>
<comment type="similarity">
    <text evidence="4">Belongs to the protein kinase superfamily. Ser/Thr protein kinase family.</text>
</comment>
<name>PSKR1_ARATH</name>
<keyword id="KW-0002">3D-structure</keyword>
<keyword id="KW-0067">ATP-binding</keyword>
<keyword id="KW-1003">Cell membrane</keyword>
<keyword id="KW-0325">Glycoprotein</keyword>
<keyword id="KW-0418">Kinase</keyword>
<keyword id="KW-0433">Leucine-rich repeat</keyword>
<keyword id="KW-0456">Lyase</keyword>
<keyword id="KW-0472">Membrane</keyword>
<keyword id="KW-0547">Nucleotide-binding</keyword>
<keyword id="KW-0597">Phosphoprotein</keyword>
<keyword id="KW-0675">Receptor</keyword>
<keyword id="KW-1185">Reference proteome</keyword>
<keyword id="KW-0677">Repeat</keyword>
<keyword id="KW-0723">Serine/threonine-protein kinase</keyword>
<keyword id="KW-0732">Signal</keyword>
<keyword id="KW-0808">Transferase</keyword>
<keyword id="KW-0812">Transmembrane</keyword>
<keyword id="KW-1133">Transmembrane helix</keyword>
<protein>
    <recommendedName>
        <fullName evidence="15">Phytosulfokine receptor 1</fullName>
        <shortName>AtPSKR1</shortName>
        <ecNumber evidence="10">2.7.11.1</ecNumber>
        <ecNumber evidence="10">4.6.1.2</ecNumber>
    </recommendedName>
    <alternativeName>
        <fullName evidence="16">Guanylate cyclase</fullName>
    </alternativeName>
    <alternativeName>
        <fullName>Phytosulfokine LRR receptor kinase 1</fullName>
    </alternativeName>
    <alternativeName>
        <fullName evidence="16">Protein serine-threonine kinase</fullName>
    </alternativeName>
</protein>
<evidence type="ECO:0000250" key="1">
    <source>
        <dbReference type="UniProtKB" id="C0LGT6"/>
    </source>
</evidence>
<evidence type="ECO:0000250" key="2">
    <source>
        <dbReference type="UniProtKB" id="O22476"/>
    </source>
</evidence>
<evidence type="ECO:0000255" key="3"/>
<evidence type="ECO:0000255" key="4">
    <source>
        <dbReference type="PROSITE-ProRule" id="PRU00159"/>
    </source>
</evidence>
<evidence type="ECO:0000255" key="5">
    <source>
        <dbReference type="PROSITE-ProRule" id="PRU10027"/>
    </source>
</evidence>
<evidence type="ECO:0000269" key="6">
    <source>
    </source>
</evidence>
<evidence type="ECO:0000269" key="7">
    <source>
    </source>
</evidence>
<evidence type="ECO:0000269" key="8">
    <source>
    </source>
</evidence>
<evidence type="ECO:0000269" key="9">
    <source>
    </source>
</evidence>
<evidence type="ECO:0000269" key="10">
    <source>
    </source>
</evidence>
<evidence type="ECO:0000269" key="11">
    <source>
    </source>
</evidence>
<evidence type="ECO:0000269" key="12">
    <source>
    </source>
</evidence>
<evidence type="ECO:0000269" key="13">
    <source>
    </source>
</evidence>
<evidence type="ECO:0000269" key="14">
    <source>
    </source>
</evidence>
<evidence type="ECO:0000303" key="15">
    <source>
    </source>
</evidence>
<evidence type="ECO:0000303" key="16">
    <source>
    </source>
</evidence>
<evidence type="ECO:0000305" key="17"/>
<evidence type="ECO:0000312" key="18">
    <source>
        <dbReference type="Araport" id="AT2G02220"/>
    </source>
</evidence>
<evidence type="ECO:0000312" key="19">
    <source>
        <dbReference type="EMBL" id="AAM15093.1"/>
    </source>
</evidence>
<evidence type="ECO:0007829" key="20">
    <source>
        <dbReference type="PDB" id="4Z63"/>
    </source>
</evidence>
<evidence type="ECO:0007829" key="21">
    <source>
        <dbReference type="PDB" id="4Z64"/>
    </source>
</evidence>
<sequence length="1008" mass="112354">MRVHRFCVIVIFLTELLCFFYSSESQTTSRCHPHDLEALRDFIAHLEPKPDGWINSSSSTDCCNWTGITCNSNNTGRVIRLELGNKKLSGKLSESLGKLDEIRVLNLSRNFIKDSIPLSIFNLKNLQTLDLSSNDLSGGIPTSINLPALQSFDLSSNKFNGSLPSHICHNSTQIRVVKLAVNYFAGNFTSGFGKCVLLEHLCLGMNDLTGNIPEDLFHLKRLNLLGIQENRLSGSLSREIRNLSSLVRLDVSWNLFSGEIPDVFDELPQLKFFLGQTNGFIGGIPKSLANSPSLNLLNLRNNSLSGRLMLNCTAMIALNSLDLGTNRFNGRLPENLPDCKRLKNVNLARNTFHGQVPESFKNFESLSYFSLSNSSLANISSALGILQHCKNLTTLVLTLNFHGEALPDDSSLHFEKLKVLVVANCRLTGSMPRWLSSSNELQLLDLSWNRLTGAIPSWIGDFKALFYLDLSNNSFTGEIPKSLTKLESLTSRNISVNEPSPDFPFFMKRNESARALQYNQIFGFPPTIELGHNNLSGPIWEEFGNLKKLHVFDLKWNALSGSIPSSLSGMTSLEALDLSNNRLSGSIPVSLQQLSFLSKFSVAYNNLSGVIPSGGQFQTFPNSSFESNHLCGEHRFPCSEGTESALIKRSRRSRGGDIGMAIGIAFGSVFLLTLLSLIVLRARRRSGEVDPEIEESESMNRKELGEIGSKLVVLFQSNDKELSYDDLLDSTNSFDQANIIGCGGFGMVYKATLPDGKKVAIKKLSGDCGQIEREFEAEVETLSRAQHPNLVLLRGFCFYKNDRLLIYSYMENGSLDYWLHERNDGPALLKWKTRLRIAQGAAKGLLYLHEGCDPHILHRDIKSSNILLDENFNSHLADFGLARLMSPYETHVSTDLVGTLGYIPPEYGQASVATYKGDVYSFGVVLLELLTDKRPVDMCKPKGCRDLISWVVKMKHESRASEVFDPLIYSKENDKEMFRVLEIACLCLSENPKQRPTTQQLVSWLDDV</sequence>
<feature type="signal peptide" evidence="3">
    <location>
        <begin position="1"/>
        <end position="25"/>
    </location>
</feature>
<feature type="chain" id="PRO_0000024371" description="Phytosulfokine receptor 1">
    <location>
        <begin position="26"/>
        <end position="1008"/>
    </location>
</feature>
<feature type="transmembrane region" description="Helical" evidence="3">
    <location>
        <begin position="660"/>
        <end position="680"/>
    </location>
</feature>
<feature type="repeat" description="LRR 1">
    <location>
        <begin position="75"/>
        <end position="98"/>
    </location>
</feature>
<feature type="repeat" description="LRR 2">
    <location>
        <begin position="99"/>
        <end position="123"/>
    </location>
</feature>
<feature type="repeat" description="LRR 3">
    <location>
        <begin position="124"/>
        <end position="148"/>
    </location>
</feature>
<feature type="repeat" description="LRR 4">
    <location>
        <begin position="150"/>
        <end position="170"/>
    </location>
</feature>
<feature type="repeat" description="LRR 5">
    <location>
        <begin position="172"/>
        <end position="194"/>
    </location>
</feature>
<feature type="repeat" description="LRR 6">
    <location>
        <begin position="195"/>
        <end position="219"/>
    </location>
</feature>
<feature type="repeat" description="LRR 7">
    <location>
        <begin position="221"/>
        <end position="243"/>
    </location>
</feature>
<feature type="repeat" description="LRR 8">
    <location>
        <begin position="244"/>
        <end position="266"/>
    </location>
</feature>
<feature type="repeat" description="LRR 9">
    <location>
        <begin position="291"/>
        <end position="315"/>
    </location>
</feature>
<feature type="repeat" description="LRR 10">
    <location>
        <begin position="316"/>
        <end position="339"/>
    </location>
</feature>
<feature type="repeat" description="LRR 11">
    <location>
        <begin position="341"/>
        <end position="362"/>
    </location>
</feature>
<feature type="repeat" description="LRR 12">
    <location>
        <begin position="363"/>
        <end position="387"/>
    </location>
</feature>
<feature type="repeat" description="LRR 13">
    <location>
        <begin position="392"/>
        <end position="414"/>
    </location>
</feature>
<feature type="repeat" description="LRR 14">
    <location>
        <begin position="415"/>
        <end position="438"/>
    </location>
</feature>
<feature type="repeat" description="LRR 15">
    <location>
        <begin position="439"/>
        <end position="464"/>
    </location>
</feature>
<feature type="repeat" description="LRR 16">
    <location>
        <begin position="466"/>
        <end position="486"/>
    </location>
</feature>
<feature type="repeat" description="LRR 17">
    <location>
        <begin position="521"/>
        <end position="545"/>
    </location>
</feature>
<feature type="repeat" description="LRR 18">
    <location>
        <begin position="546"/>
        <end position="570"/>
    </location>
</feature>
<feature type="repeat" description="LRR 19">
    <location>
        <begin position="571"/>
        <end position="594"/>
    </location>
</feature>
<feature type="repeat" description="LRR 20">
    <location>
        <begin position="596"/>
        <end position="619"/>
    </location>
</feature>
<feature type="domain" description="Protein kinase" evidence="4">
    <location>
        <begin position="734"/>
        <end position="1005"/>
    </location>
</feature>
<feature type="active site" description="Proton acceptor" evidence="4 5">
    <location>
        <position position="860"/>
    </location>
</feature>
<feature type="binding site" evidence="14">
    <location>
        <position position="300"/>
    </location>
    <ligand>
        <name>phytosulfokine</name>
        <dbReference type="ChEBI" id="CHEBI:172962"/>
    </ligand>
</feature>
<feature type="binding site" evidence="14">
    <location>
        <position position="346"/>
    </location>
    <ligand>
        <name>phytosulfokine</name>
        <dbReference type="ChEBI" id="CHEBI:172962"/>
    </ligand>
</feature>
<feature type="binding site" evidence="14">
    <location>
        <position position="370"/>
    </location>
    <ligand>
        <name>phytosulfokine</name>
        <dbReference type="ChEBI" id="CHEBI:172962"/>
    </ligand>
</feature>
<feature type="binding site" evidence="14">
    <location>
        <position position="372"/>
    </location>
    <ligand>
        <name>phytosulfokine</name>
        <dbReference type="ChEBI" id="CHEBI:172962"/>
    </ligand>
</feature>
<feature type="binding site" evidence="14">
    <location>
        <position position="398"/>
    </location>
    <ligand>
        <name>phytosulfokine</name>
        <dbReference type="ChEBI" id="CHEBI:172962"/>
    </ligand>
</feature>
<feature type="binding site" evidence="14">
    <location>
        <position position="424"/>
    </location>
    <ligand>
        <name>phytosulfokine</name>
        <dbReference type="ChEBI" id="CHEBI:172962"/>
    </ligand>
</feature>
<feature type="binding site" evidence="14">
    <location>
        <position position="445"/>
    </location>
    <ligand>
        <name>phytosulfokine</name>
        <dbReference type="ChEBI" id="CHEBI:172962"/>
    </ligand>
</feature>
<feature type="binding site" evidence="14">
    <location>
        <position position="508"/>
    </location>
    <ligand>
        <name>phytosulfokine</name>
        <dbReference type="ChEBI" id="CHEBI:172962"/>
    </ligand>
</feature>
<feature type="binding site" evidence="4">
    <location>
        <begin position="740"/>
        <end position="748"/>
    </location>
    <ligand>
        <name>ATP</name>
        <dbReference type="ChEBI" id="CHEBI:30616"/>
    </ligand>
</feature>
<feature type="binding site" evidence="4">
    <location>
        <position position="762"/>
    </location>
    <ligand>
        <name>ATP</name>
        <dbReference type="ChEBI" id="CHEBI:30616"/>
    </ligand>
</feature>
<feature type="modified residue" description="Phosphothreonine" evidence="2">
    <location>
        <position position="731"/>
    </location>
</feature>
<feature type="modified residue" description="Phosphotyrosine" evidence="2">
    <location>
        <position position="807"/>
    </location>
</feature>
<feature type="modified residue" description="Phosphotyrosine" evidence="1">
    <location>
        <position position="847"/>
    </location>
</feature>
<feature type="modified residue" description="Phosphotyrosine" evidence="1">
    <location>
        <position position="902"/>
    </location>
</feature>
<feature type="glycosylation site" description="N-linked (GlcNAc...) asparagine" evidence="3">
    <location>
        <position position="55"/>
    </location>
</feature>
<feature type="glycosylation site" description="N-linked (GlcNAc...) asparagine" evidence="3">
    <location>
        <position position="64"/>
    </location>
</feature>
<feature type="glycosylation site" description="N-linked (GlcNAc...) asparagine" evidence="3">
    <location>
        <position position="73"/>
    </location>
</feature>
<feature type="glycosylation site" description="N-linked (GlcNAc...) asparagine" evidence="3">
    <location>
        <position position="106"/>
    </location>
</feature>
<feature type="glycosylation site" description="N-linked (GlcNAc...) asparagine" evidence="3">
    <location>
        <position position="160"/>
    </location>
</feature>
<feature type="glycosylation site" description="N-linked (GlcNAc...) asparagine" evidence="3">
    <location>
        <position position="170"/>
    </location>
</feature>
<feature type="glycosylation site" description="N-linked (GlcNAc...) asparagine" evidence="3">
    <location>
        <position position="187"/>
    </location>
</feature>
<feature type="glycosylation site" description="N-linked (GlcNAc...) asparagine" evidence="3">
    <location>
        <position position="242"/>
    </location>
</feature>
<feature type="glycosylation site" description="N-linked (GlcNAc...) asparagine" evidence="3">
    <location>
        <position position="301"/>
    </location>
</feature>
<feature type="glycosylation site" description="N-linked (GlcNAc...) asparagine" evidence="3">
    <location>
        <position position="311"/>
    </location>
</feature>
<feature type="glycosylation site" description="N-linked (GlcNAc...) asparagine" evidence="3">
    <location>
        <position position="373"/>
    </location>
</feature>
<feature type="glycosylation site" description="N-linked (GlcNAc...) asparagine" evidence="3">
    <location>
        <position position="378"/>
    </location>
</feature>
<feature type="glycosylation site" description="N-linked (GlcNAc...) asparagine" evidence="3">
    <location>
        <position position="391"/>
    </location>
</feature>
<feature type="glycosylation site" description="N-linked (GlcNAc...) asparagine" evidence="3">
    <location>
        <position position="472"/>
    </location>
</feature>
<feature type="glycosylation site" description="N-linked (GlcNAc...) asparagine" evidence="3">
    <location>
        <position position="493"/>
    </location>
</feature>
<feature type="glycosylation site" description="N-linked (GlcNAc...) asparagine" evidence="3">
    <location>
        <position position="510"/>
    </location>
</feature>
<feature type="glycosylation site" description="N-linked (GlcNAc...) asparagine" evidence="3">
    <location>
        <position position="534"/>
    </location>
</feature>
<feature type="glycosylation site" description="N-linked (GlcNAc...) asparagine" evidence="3">
    <location>
        <position position="606"/>
    </location>
</feature>
<feature type="glycosylation site" description="N-linked (GlcNAc...) asparagine" evidence="3">
    <location>
        <position position="622"/>
    </location>
</feature>
<feature type="mutagenesis site" description="Decreased responsiveness to PSK for interaction with BAK1 and decreased root length." evidence="14">
    <original>F</original>
    <variation>D</variation>
    <location>
        <position position="596"/>
    </location>
</feature>
<feature type="mutagenesis site" description="Decreased responsiveness to PSK for interaction with BAK1 and decreased root length." evidence="14">
    <original>S</original>
    <variation>Y</variation>
    <location>
        <position position="598"/>
    </location>
</feature>
<feature type="mutagenesis site" description="Decreased responsiveness to PSK for interaction with BAK1 and decreased root length." evidence="14">
    <original>T</original>
    <variation>Y</variation>
    <location>
        <position position="619"/>
    </location>
</feature>
<feature type="mutagenesis site" description="No effect on responsiveness to PSK for interaction with BAK1 and no effect on root length." evidence="14">
    <original>S</original>
    <variation>Y</variation>
    <location>
        <position position="623"/>
    </location>
</feature>
<feature type="mutagenesis site" description="Decreased guanylate cyclase activity and impaired PSK receptor function." evidence="10 13">
    <original>G</original>
    <variation>K</variation>
    <location>
        <position position="923"/>
    </location>
</feature>
<feature type="helix" evidence="20">
    <location>
        <begin position="33"/>
        <end position="44"/>
    </location>
</feature>
<feature type="strand" evidence="20">
    <location>
        <begin position="46"/>
        <end position="48"/>
    </location>
</feature>
<feature type="helix" evidence="20">
    <location>
        <begin position="51"/>
        <end position="53"/>
    </location>
</feature>
<feature type="turn" evidence="20">
    <location>
        <begin position="54"/>
        <end position="58"/>
    </location>
</feature>
<feature type="helix" evidence="20">
    <location>
        <begin position="62"/>
        <end position="64"/>
    </location>
</feature>
<feature type="strand" evidence="20">
    <location>
        <begin position="68"/>
        <end position="71"/>
    </location>
</feature>
<feature type="turn" evidence="20">
    <location>
        <begin position="72"/>
        <end position="75"/>
    </location>
</feature>
<feature type="strand" evidence="20">
    <location>
        <begin position="76"/>
        <end position="82"/>
    </location>
</feature>
<feature type="strand" evidence="20">
    <location>
        <begin position="89"/>
        <end position="91"/>
    </location>
</feature>
<feature type="helix" evidence="20">
    <location>
        <begin position="94"/>
        <end position="98"/>
    </location>
</feature>
<feature type="strand" evidence="20">
    <location>
        <begin position="104"/>
        <end position="106"/>
    </location>
</feature>
<feature type="strand" evidence="20">
    <location>
        <begin position="109"/>
        <end position="114"/>
    </location>
</feature>
<feature type="helix" evidence="20">
    <location>
        <begin position="118"/>
        <end position="122"/>
    </location>
</feature>
<feature type="strand" evidence="20">
    <location>
        <begin position="128"/>
        <end position="130"/>
    </location>
</feature>
<feature type="strand" evidence="20">
    <location>
        <begin position="133"/>
        <end position="138"/>
    </location>
</feature>
<feature type="strand" evidence="20">
    <location>
        <begin position="151"/>
        <end position="153"/>
    </location>
</feature>
<feature type="strand" evidence="20">
    <location>
        <begin position="156"/>
        <end position="159"/>
    </location>
</feature>
<feature type="strand" evidence="21">
    <location>
        <begin position="160"/>
        <end position="162"/>
    </location>
</feature>
<feature type="helix" evidence="20">
    <location>
        <begin position="165"/>
        <end position="168"/>
    </location>
</feature>
<feature type="strand" evidence="20">
    <location>
        <begin position="176"/>
        <end position="178"/>
    </location>
</feature>
<feature type="strand" evidence="20">
    <location>
        <begin position="185"/>
        <end position="187"/>
    </location>
</feature>
<feature type="helix" evidence="20">
    <location>
        <begin position="192"/>
        <end position="194"/>
    </location>
</feature>
<feature type="strand" evidence="20">
    <location>
        <begin position="200"/>
        <end position="202"/>
    </location>
</feature>
<feature type="strand" evidence="20">
    <location>
        <begin position="205"/>
        <end position="210"/>
    </location>
</feature>
<feature type="helix" evidence="20">
    <location>
        <begin position="214"/>
        <end position="218"/>
    </location>
</feature>
<feature type="strand" evidence="20">
    <location>
        <begin position="224"/>
        <end position="226"/>
    </location>
</feature>
<feature type="strand" evidence="20">
    <location>
        <begin position="233"/>
        <end position="235"/>
    </location>
</feature>
<feature type="helix" evidence="20">
    <location>
        <begin position="238"/>
        <end position="242"/>
    </location>
</feature>
<feature type="strand" evidence="20">
    <location>
        <begin position="247"/>
        <end position="250"/>
    </location>
</feature>
<feature type="strand" evidence="20">
    <location>
        <begin position="253"/>
        <end position="259"/>
    </location>
</feature>
<feature type="helix" evidence="20">
    <location>
        <begin position="264"/>
        <end position="266"/>
    </location>
</feature>
<feature type="strand" evidence="20">
    <location>
        <begin position="272"/>
        <end position="274"/>
    </location>
</feature>
<feature type="strand" evidence="20">
    <location>
        <begin position="277"/>
        <end position="282"/>
    </location>
</feature>
<feature type="helix" evidence="20">
    <location>
        <begin position="286"/>
        <end position="289"/>
    </location>
</feature>
<feature type="strand" evidence="20">
    <location>
        <begin position="295"/>
        <end position="298"/>
    </location>
</feature>
<feature type="strand" evidence="20">
    <location>
        <begin position="305"/>
        <end position="307"/>
    </location>
</feature>
<feature type="turn" evidence="20">
    <location>
        <begin position="312"/>
        <end position="314"/>
    </location>
</feature>
<feature type="strand" evidence="20">
    <location>
        <begin position="320"/>
        <end position="322"/>
    </location>
</feature>
<feature type="strand" evidence="20">
    <location>
        <begin position="325"/>
        <end position="331"/>
    </location>
</feature>
<feature type="helix" evidence="20">
    <location>
        <begin position="336"/>
        <end position="338"/>
    </location>
</feature>
<feature type="strand" evidence="20">
    <location>
        <begin position="344"/>
        <end position="346"/>
    </location>
</feature>
<feature type="strand" evidence="21">
    <location>
        <begin position="350"/>
        <end position="352"/>
    </location>
</feature>
<feature type="helix" evidence="20">
    <location>
        <begin position="358"/>
        <end position="362"/>
    </location>
</feature>
<feature type="strand" evidence="20">
    <location>
        <begin position="368"/>
        <end position="370"/>
    </location>
</feature>
<feature type="helix" evidence="20">
    <location>
        <begin position="379"/>
        <end position="386"/>
    </location>
</feature>
<feature type="strand" evidence="20">
    <location>
        <begin position="394"/>
        <end position="396"/>
    </location>
</feature>
<feature type="strand" evidence="20">
    <location>
        <begin position="419"/>
        <end position="421"/>
    </location>
</feature>
<feature type="strand" evidence="21">
    <location>
        <begin position="428"/>
        <end position="430"/>
    </location>
</feature>
<feature type="helix" evidence="20">
    <location>
        <begin position="433"/>
        <end position="437"/>
    </location>
</feature>
<feature type="strand" evidence="20">
    <location>
        <begin position="443"/>
        <end position="445"/>
    </location>
</feature>
<feature type="strand" evidence="20">
    <location>
        <begin position="452"/>
        <end position="454"/>
    </location>
</feature>
<feature type="helix" evidence="20">
    <location>
        <begin position="457"/>
        <end position="460"/>
    </location>
</feature>
<feature type="strand" evidence="20">
    <location>
        <begin position="467"/>
        <end position="469"/>
    </location>
</feature>
<feature type="strand" evidence="20">
    <location>
        <begin position="472"/>
        <end position="477"/>
    </location>
</feature>
<feature type="helix" evidence="20">
    <location>
        <begin position="481"/>
        <end position="484"/>
    </location>
</feature>
<feature type="helix" evidence="20">
    <location>
        <begin position="487"/>
        <end position="490"/>
    </location>
</feature>
<feature type="strand" evidence="20">
    <location>
        <begin position="505"/>
        <end position="507"/>
    </location>
</feature>
<feature type="strand" evidence="21">
    <location>
        <begin position="509"/>
        <end position="513"/>
    </location>
</feature>
<feature type="strand" evidence="20">
    <location>
        <begin position="516"/>
        <end position="520"/>
    </location>
</feature>
<feature type="helix" evidence="20">
    <location>
        <begin position="521"/>
        <end position="523"/>
    </location>
</feature>
<feature type="strand" evidence="20">
    <location>
        <begin position="527"/>
        <end position="529"/>
    </location>
</feature>
<feature type="helix" evidence="20">
    <location>
        <begin position="541"/>
        <end position="545"/>
    </location>
</feature>
<feature type="strand" evidence="20">
    <location>
        <begin position="551"/>
        <end position="553"/>
    </location>
</feature>
<feature type="helix" evidence="20">
    <location>
        <begin position="565"/>
        <end position="569"/>
    </location>
</feature>
<feature type="strand" evidence="20">
    <location>
        <begin position="575"/>
        <end position="577"/>
    </location>
</feature>
<feature type="helix" evidence="20">
    <location>
        <begin position="589"/>
        <end position="593"/>
    </location>
</feature>
<feature type="strand" evidence="20">
    <location>
        <begin position="599"/>
        <end position="601"/>
    </location>
</feature>
<feature type="strand" evidence="20">
    <location>
        <begin position="604"/>
        <end position="611"/>
    </location>
</feature>
<feature type="helix" evidence="20">
    <location>
        <begin position="617"/>
        <end position="619"/>
    </location>
</feature>
<feature type="helix" evidence="20">
    <location>
        <begin position="622"/>
        <end position="624"/>
    </location>
</feature>
<feature type="strand" evidence="20">
    <location>
        <begin position="627"/>
        <end position="632"/>
    </location>
</feature>
<feature type="strand" evidence="21">
    <location>
        <begin position="633"/>
        <end position="636"/>
    </location>
</feature>
<accession>Q9ZVR7</accession>
<accession>Q0WNS6</accession>
<accession>Q8S8L2</accession>
<dbReference type="EC" id="2.7.11.1" evidence="10"/>
<dbReference type="EC" id="4.6.1.2" evidence="10"/>
<dbReference type="EMBL" id="AC005312">
    <property type="protein sequence ID" value="AAC78507.3"/>
    <property type="molecule type" value="Genomic_DNA"/>
</dbReference>
<dbReference type="EMBL" id="AC005936">
    <property type="protein sequence ID" value="AAM15093.1"/>
    <property type="molecule type" value="Genomic_DNA"/>
</dbReference>
<dbReference type="EMBL" id="CP002685">
    <property type="protein sequence ID" value="AEC05558.1"/>
    <property type="molecule type" value="Genomic_DNA"/>
</dbReference>
<dbReference type="EMBL" id="AK229360">
    <property type="protein sequence ID" value="BAF01223.1"/>
    <property type="molecule type" value="mRNA"/>
</dbReference>
<dbReference type="PIR" id="D84434">
    <property type="entry name" value="D84434"/>
</dbReference>
<dbReference type="RefSeq" id="NP_178330.1">
    <property type="nucleotide sequence ID" value="NM_126282.3"/>
</dbReference>
<dbReference type="PDB" id="4Z63">
    <property type="method" value="X-ray"/>
    <property type="resolution" value="2.51 A"/>
    <property type="chains" value="A=24-648"/>
</dbReference>
<dbReference type="PDB" id="4Z64">
    <property type="method" value="X-ray"/>
    <property type="resolution" value="2.66 A"/>
    <property type="chains" value="A=24-648"/>
</dbReference>
<dbReference type="PDBsum" id="4Z63"/>
<dbReference type="PDBsum" id="4Z64"/>
<dbReference type="SMR" id="Q9ZVR7"/>
<dbReference type="BioGRID" id="156">
    <property type="interactions" value="37"/>
</dbReference>
<dbReference type="DIP" id="DIP-61780N"/>
<dbReference type="FunCoup" id="Q9ZVR7">
    <property type="interactions" value="913"/>
</dbReference>
<dbReference type="IntAct" id="Q9ZVR7">
    <property type="interactions" value="43"/>
</dbReference>
<dbReference type="STRING" id="3702.Q9ZVR7"/>
<dbReference type="TCDB" id="1.A.87.2.9">
    <property type="family name" value="the mechanosensitive calcium channel (mca) family"/>
</dbReference>
<dbReference type="GlyCosmos" id="Q9ZVR7">
    <property type="glycosylation" value="19 sites, No reported glycans"/>
</dbReference>
<dbReference type="GlyGen" id="Q9ZVR7">
    <property type="glycosylation" value="20 sites"/>
</dbReference>
<dbReference type="iPTMnet" id="Q9ZVR7"/>
<dbReference type="PaxDb" id="3702-AT2G02220.1"/>
<dbReference type="ProteomicsDB" id="248894"/>
<dbReference type="EnsemblPlants" id="AT2G02220.1">
    <property type="protein sequence ID" value="AT2G02220.1"/>
    <property type="gene ID" value="AT2G02220"/>
</dbReference>
<dbReference type="GeneID" id="814753"/>
<dbReference type="Gramene" id="AT2G02220.1">
    <property type="protein sequence ID" value="AT2G02220.1"/>
    <property type="gene ID" value="AT2G02220"/>
</dbReference>
<dbReference type="KEGG" id="ath:AT2G02220"/>
<dbReference type="Araport" id="AT2G02220"/>
<dbReference type="TAIR" id="AT2G02220">
    <property type="gene designation" value="PSKR1"/>
</dbReference>
<dbReference type="eggNOG" id="ENOG502QV5Y">
    <property type="taxonomic scope" value="Eukaryota"/>
</dbReference>
<dbReference type="HOGENOM" id="CLU_000288_22_9_1"/>
<dbReference type="InParanoid" id="Q9ZVR7"/>
<dbReference type="OMA" id="SSNCCDW"/>
<dbReference type="OrthoDB" id="676979at2759"/>
<dbReference type="PhylomeDB" id="Q9ZVR7"/>
<dbReference type="SABIO-RK" id="Q9ZVR7"/>
<dbReference type="PRO" id="PR:Q9ZVR7"/>
<dbReference type="Proteomes" id="UP000006548">
    <property type="component" value="Chromosome 2"/>
</dbReference>
<dbReference type="ExpressionAtlas" id="Q9ZVR7">
    <property type="expression patterns" value="baseline and differential"/>
</dbReference>
<dbReference type="GO" id="GO:0005886">
    <property type="term" value="C:plasma membrane"/>
    <property type="evidence" value="ECO:0007669"/>
    <property type="project" value="UniProtKB-SubCell"/>
</dbReference>
<dbReference type="GO" id="GO:0005524">
    <property type="term" value="F:ATP binding"/>
    <property type="evidence" value="ECO:0007669"/>
    <property type="project" value="UniProtKB-KW"/>
</dbReference>
<dbReference type="GO" id="GO:0004383">
    <property type="term" value="F:guanylate cyclase activity"/>
    <property type="evidence" value="ECO:0000314"/>
    <property type="project" value="TAIR"/>
</dbReference>
<dbReference type="GO" id="GO:0001653">
    <property type="term" value="F:peptide receptor activity"/>
    <property type="evidence" value="ECO:0000314"/>
    <property type="project" value="TAIR"/>
</dbReference>
<dbReference type="GO" id="GO:0004672">
    <property type="term" value="F:protein kinase activity"/>
    <property type="evidence" value="ECO:0000314"/>
    <property type="project" value="TAIR"/>
</dbReference>
<dbReference type="GO" id="GO:0106310">
    <property type="term" value="F:protein serine kinase activity"/>
    <property type="evidence" value="ECO:0007669"/>
    <property type="project" value="RHEA"/>
</dbReference>
<dbReference type="GO" id="GO:0004674">
    <property type="term" value="F:protein serine/threonine kinase activity"/>
    <property type="evidence" value="ECO:0000314"/>
    <property type="project" value="TAIR"/>
</dbReference>
<dbReference type="GO" id="GO:0045087">
    <property type="term" value="P:innate immune response"/>
    <property type="evidence" value="ECO:0000315"/>
    <property type="project" value="TAIR"/>
</dbReference>
<dbReference type="GO" id="GO:0031347">
    <property type="term" value="P:regulation of defense response"/>
    <property type="evidence" value="ECO:0000316"/>
    <property type="project" value="TAIR"/>
</dbReference>
<dbReference type="CDD" id="cd14066">
    <property type="entry name" value="STKc_IRAK"/>
    <property type="match status" value="1"/>
</dbReference>
<dbReference type="FunFam" id="1.10.510.10:FF:000309">
    <property type="entry name" value="Leucine-rich repeat receptor-like protein kinase"/>
    <property type="match status" value="1"/>
</dbReference>
<dbReference type="FunFam" id="3.80.10.10:FF:001962">
    <property type="entry name" value="Phytosulfokine receptor 1"/>
    <property type="match status" value="1"/>
</dbReference>
<dbReference type="FunFam" id="3.30.200.20:FF:000125">
    <property type="entry name" value="Protein STRUBBELIG-RECEPTOR FAMILY 8"/>
    <property type="match status" value="1"/>
</dbReference>
<dbReference type="FunFam" id="3.80.10.10:FF:000213">
    <property type="entry name" value="Tyrosine-sulfated glycopeptide receptor 1"/>
    <property type="match status" value="1"/>
</dbReference>
<dbReference type="Gene3D" id="3.30.200.20">
    <property type="entry name" value="Phosphorylase Kinase, domain 1"/>
    <property type="match status" value="1"/>
</dbReference>
<dbReference type="Gene3D" id="3.80.10.10">
    <property type="entry name" value="Ribonuclease Inhibitor"/>
    <property type="match status" value="2"/>
</dbReference>
<dbReference type="Gene3D" id="1.10.510.10">
    <property type="entry name" value="Transferase(Phosphotransferase) domain 1"/>
    <property type="match status" value="1"/>
</dbReference>
<dbReference type="InterPro" id="IPR011009">
    <property type="entry name" value="Kinase-like_dom_sf"/>
</dbReference>
<dbReference type="InterPro" id="IPR001611">
    <property type="entry name" value="Leu-rich_rpt"/>
</dbReference>
<dbReference type="InterPro" id="IPR003591">
    <property type="entry name" value="Leu-rich_rpt_typical-subtyp"/>
</dbReference>
<dbReference type="InterPro" id="IPR032675">
    <property type="entry name" value="LRR_dom_sf"/>
</dbReference>
<dbReference type="InterPro" id="IPR013210">
    <property type="entry name" value="LRR_N_plant-typ"/>
</dbReference>
<dbReference type="InterPro" id="IPR051824">
    <property type="entry name" value="LRR_Rcpt-Like_S/T_Kinase"/>
</dbReference>
<dbReference type="InterPro" id="IPR000719">
    <property type="entry name" value="Prot_kinase_dom"/>
</dbReference>
<dbReference type="InterPro" id="IPR017441">
    <property type="entry name" value="Protein_kinase_ATP_BS"/>
</dbReference>
<dbReference type="InterPro" id="IPR008271">
    <property type="entry name" value="Ser/Thr_kinase_AS"/>
</dbReference>
<dbReference type="PANTHER" id="PTHR48006">
    <property type="entry name" value="LEUCINE-RICH REPEAT-CONTAINING PROTEIN DDB_G0281931-RELATED"/>
    <property type="match status" value="1"/>
</dbReference>
<dbReference type="PANTHER" id="PTHR48006:SF20">
    <property type="entry name" value="OS08G0276400 PROTEIN"/>
    <property type="match status" value="1"/>
</dbReference>
<dbReference type="Pfam" id="PF00560">
    <property type="entry name" value="LRR_1"/>
    <property type="match status" value="3"/>
</dbReference>
<dbReference type="Pfam" id="PF13855">
    <property type="entry name" value="LRR_8"/>
    <property type="match status" value="2"/>
</dbReference>
<dbReference type="Pfam" id="PF08263">
    <property type="entry name" value="LRRNT_2"/>
    <property type="match status" value="1"/>
</dbReference>
<dbReference type="Pfam" id="PF00069">
    <property type="entry name" value="Pkinase"/>
    <property type="match status" value="1"/>
</dbReference>
<dbReference type="PRINTS" id="PR00019">
    <property type="entry name" value="LEURICHRPT"/>
</dbReference>
<dbReference type="SMART" id="SM00369">
    <property type="entry name" value="LRR_TYP"/>
    <property type="match status" value="6"/>
</dbReference>
<dbReference type="SMART" id="SM00220">
    <property type="entry name" value="S_TKc"/>
    <property type="match status" value="1"/>
</dbReference>
<dbReference type="SUPFAM" id="SSF52058">
    <property type="entry name" value="L domain-like"/>
    <property type="match status" value="1"/>
</dbReference>
<dbReference type="SUPFAM" id="SSF56112">
    <property type="entry name" value="Protein kinase-like (PK-like)"/>
    <property type="match status" value="1"/>
</dbReference>
<dbReference type="SUPFAM" id="SSF52047">
    <property type="entry name" value="RNI-like"/>
    <property type="match status" value="1"/>
</dbReference>
<dbReference type="PROSITE" id="PS51450">
    <property type="entry name" value="LRR"/>
    <property type="match status" value="9"/>
</dbReference>
<dbReference type="PROSITE" id="PS00107">
    <property type="entry name" value="PROTEIN_KINASE_ATP"/>
    <property type="match status" value="1"/>
</dbReference>
<dbReference type="PROSITE" id="PS50011">
    <property type="entry name" value="PROTEIN_KINASE_DOM"/>
    <property type="match status" value="1"/>
</dbReference>
<dbReference type="PROSITE" id="PS00108">
    <property type="entry name" value="PROTEIN_KINASE_ST"/>
    <property type="match status" value="1"/>
</dbReference>
<reference key="1">
    <citation type="journal article" date="1999" name="Nature">
        <title>Sequence and analysis of chromosome 2 of the plant Arabidopsis thaliana.</title>
        <authorList>
            <person name="Lin X."/>
            <person name="Kaul S."/>
            <person name="Rounsley S.D."/>
            <person name="Shea T.P."/>
            <person name="Benito M.-I."/>
            <person name="Town C.D."/>
            <person name="Fujii C.Y."/>
            <person name="Mason T.M."/>
            <person name="Bowman C.L."/>
            <person name="Barnstead M.E."/>
            <person name="Feldblyum T.V."/>
            <person name="Buell C.R."/>
            <person name="Ketchum K.A."/>
            <person name="Lee J.J."/>
            <person name="Ronning C.M."/>
            <person name="Koo H.L."/>
            <person name="Moffat K.S."/>
            <person name="Cronin L.A."/>
            <person name="Shen M."/>
            <person name="Pai G."/>
            <person name="Van Aken S."/>
            <person name="Umayam L."/>
            <person name="Tallon L.J."/>
            <person name="Gill J.E."/>
            <person name="Adams M.D."/>
            <person name="Carrera A.J."/>
            <person name="Creasy T.H."/>
            <person name="Goodman H.M."/>
            <person name="Somerville C.R."/>
            <person name="Copenhaver G.P."/>
            <person name="Preuss D."/>
            <person name="Nierman W.C."/>
            <person name="White O."/>
            <person name="Eisen J.A."/>
            <person name="Salzberg S.L."/>
            <person name="Fraser C.M."/>
            <person name="Venter J.C."/>
        </authorList>
    </citation>
    <scope>NUCLEOTIDE SEQUENCE [LARGE SCALE GENOMIC DNA]</scope>
    <source>
        <strain>cv. Columbia</strain>
    </source>
</reference>
<reference key="2">
    <citation type="journal article" date="2017" name="Plant J.">
        <title>Araport11: a complete reannotation of the Arabidopsis thaliana reference genome.</title>
        <authorList>
            <person name="Cheng C.Y."/>
            <person name="Krishnakumar V."/>
            <person name="Chan A.P."/>
            <person name="Thibaud-Nissen F."/>
            <person name="Schobel S."/>
            <person name="Town C.D."/>
        </authorList>
    </citation>
    <scope>GENOME REANNOTATION</scope>
    <source>
        <strain>cv. Columbia</strain>
    </source>
</reference>
<reference key="3">
    <citation type="submission" date="2006-07" db="EMBL/GenBank/DDBJ databases">
        <title>Large-scale analysis of RIKEN Arabidopsis full-length (RAFL) cDNAs.</title>
        <authorList>
            <person name="Totoki Y."/>
            <person name="Seki M."/>
            <person name="Ishida J."/>
            <person name="Nakajima M."/>
            <person name="Enju A."/>
            <person name="Kamiya A."/>
            <person name="Narusaka M."/>
            <person name="Shin-i T."/>
            <person name="Nakagawa M."/>
            <person name="Sakamoto N."/>
            <person name="Oishi K."/>
            <person name="Kohara Y."/>
            <person name="Kobayashi M."/>
            <person name="Toyoda A."/>
            <person name="Sakaki Y."/>
            <person name="Sakurai T."/>
            <person name="Iida K."/>
            <person name="Akiyama K."/>
            <person name="Satou M."/>
            <person name="Toyoda T."/>
            <person name="Konagaya A."/>
            <person name="Carninci P."/>
            <person name="Kawai J."/>
            <person name="Hayashizaki Y."/>
            <person name="Shinozaki K."/>
        </authorList>
    </citation>
    <scope>NUCLEOTIDE SEQUENCE [LARGE SCALE MRNA] OF 439-1008</scope>
    <source>
        <strain>cv. Columbia</strain>
    </source>
</reference>
<reference key="4">
    <citation type="journal article" date="2006" name="Plant Physiol.">
        <title>Disruption and overexpression of Arabidopsis phytosulfokine receptor gene affects cellular longevity and potential for growth.</title>
        <authorList>
            <person name="Matsubayashi Y."/>
            <person name="Ogawa M."/>
            <person name="Kihara H."/>
            <person name="Niwa M."/>
            <person name="Sakagami Y."/>
        </authorList>
    </citation>
    <scope>FUNCTION</scope>
    <scope>DISRUPTION PHENOTYPE</scope>
    <scope>TISSUE SPECIFICITY</scope>
</reference>
<reference key="5">
    <citation type="journal article" date="2007" name="Proc. Natl. Acad. Sci. U.S.A.">
        <title>Tyrosine-sulfated glycopeptide involved in cellular proliferation and expansion in Arabidopsis.</title>
        <authorList>
            <person name="Amano Y."/>
            <person name="Tsubouchi H."/>
            <person name="Shinohara H."/>
            <person name="Ogawa M."/>
            <person name="Matsubayashi Y."/>
        </authorList>
    </citation>
    <scope>FUNCTION</scope>
    <scope>DISRUPTION PHENOTYPE</scope>
    <source>
        <strain>cv. Columbia</strain>
    </source>
</reference>
<reference key="6">
    <citation type="journal article" date="2009" name="New Phytol.">
        <title>PSK-alpha promotes root growth in Arabidopsis.</title>
        <authorList>
            <person name="Kutschmar A."/>
            <person name="Rzewuski G."/>
            <person name="Stuehrwohldt N."/>
            <person name="Beemster G.T."/>
            <person name="Inze D."/>
            <person name="Sauter M."/>
        </authorList>
    </citation>
    <scope>TISSUE SPECIFICITY</scope>
    <scope>DISRUPTION PHENOTYPE</scope>
</reference>
<reference key="7">
    <citation type="journal article" date="2010" name="Physiol. Plantarum">
        <title>A role for PSK signaling in wounding and microbial interactions in Arabidopsis.</title>
        <authorList>
            <person name="Loivamaki M."/>
            <person name="Stuhrwohldt N."/>
            <person name="Deeken R."/>
            <person name="Steffens B."/>
            <person name="Roitsch T."/>
            <person name="Hedrich R."/>
            <person name="Sauter M."/>
        </authorList>
    </citation>
    <scope>INDUCTION BY FUNGAL INFECTION AND WOUNDING</scope>
</reference>
<reference key="8">
    <citation type="journal article" date="2011" name="J. Biol. Chem.">
        <title>The phytosulfokine (PSK) receptor is capable of guanylate cyclase activity and enabling cyclic GMP-dependent signaling in plants.</title>
        <authorList>
            <person name="Kwezi L."/>
            <person name="Ruzvidzo O."/>
            <person name="Wheeler J.I."/>
            <person name="Govender K."/>
            <person name="Iacuone S."/>
            <person name="Thompson P.E."/>
            <person name="Gehring C."/>
            <person name="Irving H.R."/>
        </authorList>
    </citation>
    <scope>FUNCTION</scope>
    <scope>CATALYTIC ACTIVITY</scope>
    <scope>COFACTOR</scope>
    <scope>BIOPHYSICOCHEMICAL PROPERTIES</scope>
    <scope>ACTIVITY REGULATION</scope>
    <scope>MUTAGENESIS OF GLY-923</scope>
</reference>
<reference key="9">
    <citation type="journal article" date="2013" name="Plant J.">
        <title>The tyrosine-sulfated peptide receptors PSKR1 and PSY1R modify the immunity of Arabidopsis to biotrophic and necrotrophic pathogens in an antagonistic manner.</title>
        <authorList>
            <person name="Mosher S."/>
            <person name="Seybold H."/>
            <person name="Rodriguez P."/>
            <person name="Stahl M."/>
            <person name="Davies K.A."/>
            <person name="Dayaratne S."/>
            <person name="Morillo S.A."/>
            <person name="Wierzba M."/>
            <person name="Favery B."/>
            <person name="Keller H."/>
            <person name="Tax F.E."/>
            <person name="Kemmerling B."/>
        </authorList>
    </citation>
    <scope>FUNCTION</scope>
    <scope>DISRUPTION PHENOTYPE</scope>
</reference>
<reference key="10">
    <citation type="journal article" date="2014" name="Plant J.">
        <title>Receptor kinase-mediated control of primary active proton pumping at the plasma membrane.</title>
        <authorList>
            <person name="Fuglsang A.T."/>
            <person name="Kristensen A."/>
            <person name="Cuin T.A."/>
            <person name="Schulze W.X."/>
            <person name="Persson J."/>
            <person name="Thuesen K.H."/>
            <person name="Ytting C.K."/>
            <person name="Oehlenschlaeger C.B."/>
            <person name="Mahmood K."/>
            <person name="Sondergaard T.E."/>
            <person name="Shabala S."/>
            <person name="Palmgren M.G."/>
        </authorList>
    </citation>
    <scope>SUBUNIT</scope>
</reference>
<reference key="11">
    <citation type="journal article" date="2015" name="Plant Cell">
        <title>Phytosulfokine regulates growth in Arabidopsis through a response module at the plasma membrane that includes CYCLIC NUCLEOTIDE-GATED CHANNEL17, H+-ATPase, and BAK1.</title>
        <authorList>
            <person name="Ladwig F."/>
            <person name="Dahlke R.I."/>
            <person name="Stuehrwohldt N."/>
            <person name="Hartmann J."/>
            <person name="Harter K."/>
            <person name="Sauter M."/>
        </authorList>
    </citation>
    <scope>FUNCTION</scope>
    <scope>INTERACTION WITH AHA1; AHA2 AND BAK1</scope>
    <scope>LACK OF INTERACTION WITH CNGC17 AND BRI1</scope>
    <scope>SUBCELLULAR LOCATION</scope>
    <scope>MUTAGENESIS OF GLY-923</scope>
</reference>
<reference key="12">
    <citation type="journal article" date="2015" name="Nature">
        <title>Allosteric receptor activation by the plant peptide hormone phytosulfokine.</title>
        <authorList>
            <person name="Wang J."/>
            <person name="Li H."/>
            <person name="Han Z."/>
            <person name="Zhang H."/>
            <person name="Wang T."/>
            <person name="Lin G."/>
            <person name="Chang J."/>
            <person name="Yang W."/>
            <person name="Chai J."/>
        </authorList>
    </citation>
    <scope>X-RAY CRYSTALLOGRAPHY (2.51 ANGSTROMS) OF 24-648 ALONE AND IN COMPLEX WITH PSK AND CORECEPTOR</scope>
    <scope>SUBUNIT</scope>
    <scope>MUTAGENESIS OF PHE-596; SER-598; THR-619 AND SER-623</scope>
</reference>
<organism>
    <name type="scientific">Arabidopsis thaliana</name>
    <name type="common">Mouse-ear cress</name>
    <dbReference type="NCBI Taxonomy" id="3702"/>
    <lineage>
        <taxon>Eukaryota</taxon>
        <taxon>Viridiplantae</taxon>
        <taxon>Streptophyta</taxon>
        <taxon>Embryophyta</taxon>
        <taxon>Tracheophyta</taxon>
        <taxon>Spermatophyta</taxon>
        <taxon>Magnoliopsida</taxon>
        <taxon>eudicotyledons</taxon>
        <taxon>Gunneridae</taxon>
        <taxon>Pentapetalae</taxon>
        <taxon>rosids</taxon>
        <taxon>malvids</taxon>
        <taxon>Brassicales</taxon>
        <taxon>Brassicaceae</taxon>
        <taxon>Camelineae</taxon>
        <taxon>Arabidopsis</taxon>
    </lineage>
</organism>
<proteinExistence type="evidence at protein level"/>